<sequence>MAELQNDRFLRALLKEPVDQTPVWMMRQAGRYLPEYRATRKQAGSFMDLCRNKELACEVTLQPLERYPLDAAILFSDILTIPDAMGLELRFQTGEGPIFDKPIKSMSDAKKLFVPDMASELGYVMDAVSTIRKALDGRVPLIGFSGSPWTLATYMVEGGSSKTFAKIKAMMYDQPATLHHILDVLADSVIAYLNAQIEAGAQAVQIFDTWGGVLTPRDYKEFSLNYMAKIVDGLKRENDGRKVPVILFTKGGGQWLESMAETGCDALGLDWTTDIDDARARVGDKVALQGNMDPSVLYASPDRIREEVATILEKYGQGTGHVFNLGHGIHPEIDPEHAGAFIKAVTELSPKYHK</sequence>
<accession>Q31JF4</accession>
<reference key="1">
    <citation type="journal article" date="2006" name="PLoS Biol.">
        <title>The genome of deep-sea vent chemolithoautotroph Thiomicrospira crunogena XCL-2.</title>
        <authorList>
            <person name="Scott K.M."/>
            <person name="Sievert S.M."/>
            <person name="Abril F.N."/>
            <person name="Ball L.A."/>
            <person name="Barrett C.J."/>
            <person name="Blake R.A."/>
            <person name="Boller A.J."/>
            <person name="Chain P.S.G."/>
            <person name="Clark J.A."/>
            <person name="Davis C.R."/>
            <person name="Detter C."/>
            <person name="Do K.F."/>
            <person name="Dobrinski K.P."/>
            <person name="Faza B.I."/>
            <person name="Fitzpatrick K.A."/>
            <person name="Freyermuth S.K."/>
            <person name="Harmer T.L."/>
            <person name="Hauser L.J."/>
            <person name="Huegler M."/>
            <person name="Kerfeld C.A."/>
            <person name="Klotz M.G."/>
            <person name="Kong W.W."/>
            <person name="Land M."/>
            <person name="Lapidus A."/>
            <person name="Larimer F.W."/>
            <person name="Longo D.L."/>
            <person name="Lucas S."/>
            <person name="Malfatti S.A."/>
            <person name="Massey S.E."/>
            <person name="Martin D.D."/>
            <person name="McCuddin Z."/>
            <person name="Meyer F."/>
            <person name="Moore J.L."/>
            <person name="Ocampo L.H. Jr."/>
            <person name="Paul J.H."/>
            <person name="Paulsen I.T."/>
            <person name="Reep D.K."/>
            <person name="Ren Q."/>
            <person name="Ross R.L."/>
            <person name="Sato P.Y."/>
            <person name="Thomas P."/>
            <person name="Tinkham L.E."/>
            <person name="Zeruth G.T."/>
        </authorList>
    </citation>
    <scope>NUCLEOTIDE SEQUENCE [LARGE SCALE GENOMIC DNA]</scope>
    <source>
        <strain>DSM 25203 / XCL-2</strain>
    </source>
</reference>
<dbReference type="EC" id="4.1.1.37" evidence="1"/>
<dbReference type="EMBL" id="CP000109">
    <property type="protein sequence ID" value="ABB40719.1"/>
    <property type="molecule type" value="Genomic_DNA"/>
</dbReference>
<dbReference type="SMR" id="Q31JF4"/>
<dbReference type="STRING" id="317025.Tcr_0123"/>
<dbReference type="KEGG" id="tcx:Tcr_0123"/>
<dbReference type="eggNOG" id="COG0407">
    <property type="taxonomic scope" value="Bacteria"/>
</dbReference>
<dbReference type="HOGENOM" id="CLU_040933_0_0_6"/>
<dbReference type="OrthoDB" id="9806656at2"/>
<dbReference type="UniPathway" id="UPA00251">
    <property type="reaction ID" value="UER00321"/>
</dbReference>
<dbReference type="GO" id="GO:0005829">
    <property type="term" value="C:cytosol"/>
    <property type="evidence" value="ECO:0007669"/>
    <property type="project" value="TreeGrafter"/>
</dbReference>
<dbReference type="GO" id="GO:0004853">
    <property type="term" value="F:uroporphyrinogen decarboxylase activity"/>
    <property type="evidence" value="ECO:0007669"/>
    <property type="project" value="UniProtKB-UniRule"/>
</dbReference>
<dbReference type="GO" id="GO:0019353">
    <property type="term" value="P:protoporphyrinogen IX biosynthetic process from glutamate"/>
    <property type="evidence" value="ECO:0007669"/>
    <property type="project" value="TreeGrafter"/>
</dbReference>
<dbReference type="CDD" id="cd00717">
    <property type="entry name" value="URO-D"/>
    <property type="match status" value="1"/>
</dbReference>
<dbReference type="FunFam" id="3.20.20.210:FF:000001">
    <property type="entry name" value="Uroporphyrinogen decarboxylase"/>
    <property type="match status" value="1"/>
</dbReference>
<dbReference type="Gene3D" id="3.20.20.210">
    <property type="match status" value="1"/>
</dbReference>
<dbReference type="HAMAP" id="MF_00218">
    <property type="entry name" value="URO_D"/>
    <property type="match status" value="1"/>
</dbReference>
<dbReference type="InterPro" id="IPR038071">
    <property type="entry name" value="UROD/MetE-like_sf"/>
</dbReference>
<dbReference type="InterPro" id="IPR006361">
    <property type="entry name" value="Uroporphyrinogen_deCO2ase_HemE"/>
</dbReference>
<dbReference type="InterPro" id="IPR000257">
    <property type="entry name" value="Uroporphyrinogen_deCOase"/>
</dbReference>
<dbReference type="NCBIfam" id="TIGR01464">
    <property type="entry name" value="hemE"/>
    <property type="match status" value="1"/>
</dbReference>
<dbReference type="PANTHER" id="PTHR21091">
    <property type="entry name" value="METHYLTETRAHYDROFOLATE:HOMOCYSTEINE METHYLTRANSFERASE RELATED"/>
    <property type="match status" value="1"/>
</dbReference>
<dbReference type="PANTHER" id="PTHR21091:SF169">
    <property type="entry name" value="UROPORPHYRINOGEN DECARBOXYLASE"/>
    <property type="match status" value="1"/>
</dbReference>
<dbReference type="Pfam" id="PF01208">
    <property type="entry name" value="URO-D"/>
    <property type="match status" value="1"/>
</dbReference>
<dbReference type="SUPFAM" id="SSF51726">
    <property type="entry name" value="UROD/MetE-like"/>
    <property type="match status" value="1"/>
</dbReference>
<dbReference type="PROSITE" id="PS00906">
    <property type="entry name" value="UROD_1"/>
    <property type="match status" value="1"/>
</dbReference>
<dbReference type="PROSITE" id="PS00907">
    <property type="entry name" value="UROD_2"/>
    <property type="match status" value="1"/>
</dbReference>
<gene>
    <name evidence="1" type="primary">hemE</name>
    <name type="ordered locus">Tcr_0123</name>
</gene>
<evidence type="ECO:0000255" key="1">
    <source>
        <dbReference type="HAMAP-Rule" id="MF_00218"/>
    </source>
</evidence>
<name>DCUP_HYDCU</name>
<keyword id="KW-0963">Cytoplasm</keyword>
<keyword id="KW-0210">Decarboxylase</keyword>
<keyword id="KW-0456">Lyase</keyword>
<keyword id="KW-0627">Porphyrin biosynthesis</keyword>
<proteinExistence type="inferred from homology"/>
<comment type="function">
    <text evidence="1">Catalyzes the decarboxylation of four acetate groups of uroporphyrinogen-III to yield coproporphyrinogen-III.</text>
</comment>
<comment type="catalytic activity">
    <reaction evidence="1">
        <text>uroporphyrinogen III + 4 H(+) = coproporphyrinogen III + 4 CO2</text>
        <dbReference type="Rhea" id="RHEA:19865"/>
        <dbReference type="ChEBI" id="CHEBI:15378"/>
        <dbReference type="ChEBI" id="CHEBI:16526"/>
        <dbReference type="ChEBI" id="CHEBI:57308"/>
        <dbReference type="ChEBI" id="CHEBI:57309"/>
        <dbReference type="EC" id="4.1.1.37"/>
    </reaction>
</comment>
<comment type="pathway">
    <text evidence="1">Porphyrin-containing compound metabolism; protoporphyrin-IX biosynthesis; coproporphyrinogen-III from 5-aminolevulinate: step 4/4.</text>
</comment>
<comment type="subunit">
    <text evidence="1">Homodimer.</text>
</comment>
<comment type="subcellular location">
    <subcellularLocation>
        <location evidence="1">Cytoplasm</location>
    </subcellularLocation>
</comment>
<comment type="similarity">
    <text evidence="1">Belongs to the uroporphyrinogen decarboxylase family.</text>
</comment>
<organism>
    <name type="scientific">Hydrogenovibrio crunogenus (strain DSM 25203 / XCL-2)</name>
    <name type="common">Thiomicrospira crunogena</name>
    <dbReference type="NCBI Taxonomy" id="317025"/>
    <lineage>
        <taxon>Bacteria</taxon>
        <taxon>Pseudomonadati</taxon>
        <taxon>Pseudomonadota</taxon>
        <taxon>Gammaproteobacteria</taxon>
        <taxon>Thiotrichales</taxon>
        <taxon>Piscirickettsiaceae</taxon>
        <taxon>Hydrogenovibrio</taxon>
    </lineage>
</organism>
<protein>
    <recommendedName>
        <fullName evidence="1">Uroporphyrinogen decarboxylase</fullName>
        <shortName evidence="1">UPD</shortName>
        <shortName evidence="1">URO-D</shortName>
        <ecNumber evidence="1">4.1.1.37</ecNumber>
    </recommendedName>
</protein>
<feature type="chain" id="PRO_1000023994" description="Uroporphyrinogen decarboxylase">
    <location>
        <begin position="1"/>
        <end position="354"/>
    </location>
</feature>
<feature type="binding site" evidence="1">
    <location>
        <begin position="27"/>
        <end position="31"/>
    </location>
    <ligand>
        <name>substrate</name>
    </ligand>
</feature>
<feature type="binding site" evidence="1">
    <location>
        <position position="77"/>
    </location>
    <ligand>
        <name>substrate</name>
    </ligand>
</feature>
<feature type="binding site" evidence="1">
    <location>
        <position position="154"/>
    </location>
    <ligand>
        <name>substrate</name>
    </ligand>
</feature>
<feature type="binding site" evidence="1">
    <location>
        <position position="209"/>
    </location>
    <ligand>
        <name>substrate</name>
    </ligand>
</feature>
<feature type="binding site" evidence="1">
    <location>
        <position position="327"/>
    </location>
    <ligand>
        <name>substrate</name>
    </ligand>
</feature>
<feature type="site" description="Transition state stabilizer" evidence="1">
    <location>
        <position position="77"/>
    </location>
</feature>